<name>ACCD_SOLBU</name>
<feature type="chain" id="PRO_0000359166" description="Acetyl-coenzyme A carboxylase carboxyl transferase subunit beta, chloroplastic">
    <location>
        <begin position="1"/>
        <end position="490"/>
    </location>
</feature>
<feature type="domain" description="CoA carboxyltransferase N-terminal" evidence="3">
    <location>
        <begin position="221"/>
        <end position="490"/>
    </location>
</feature>
<feature type="zinc finger region" description="C4-type" evidence="2">
    <location>
        <begin position="225"/>
        <end position="247"/>
    </location>
</feature>
<feature type="region of interest" description="Disordered" evidence="4">
    <location>
        <begin position="184"/>
        <end position="203"/>
    </location>
</feature>
<feature type="binding site" evidence="2">
    <location>
        <position position="225"/>
    </location>
    <ligand>
        <name>Zn(2+)</name>
        <dbReference type="ChEBI" id="CHEBI:29105"/>
    </ligand>
</feature>
<feature type="binding site" evidence="2">
    <location>
        <position position="228"/>
    </location>
    <ligand>
        <name>Zn(2+)</name>
        <dbReference type="ChEBI" id="CHEBI:29105"/>
    </ligand>
</feature>
<feature type="binding site" evidence="2">
    <location>
        <position position="244"/>
    </location>
    <ligand>
        <name>Zn(2+)</name>
        <dbReference type="ChEBI" id="CHEBI:29105"/>
    </ligand>
</feature>
<feature type="binding site" evidence="2">
    <location>
        <position position="247"/>
    </location>
    <ligand>
        <name>Zn(2+)</name>
        <dbReference type="ChEBI" id="CHEBI:29105"/>
    </ligand>
</feature>
<protein>
    <recommendedName>
        <fullName evidence="2">Acetyl-coenzyme A carboxylase carboxyl transferase subunit beta, chloroplastic</fullName>
        <shortName evidence="2">ACCase subunit beta</shortName>
        <shortName evidence="2">Acetyl-CoA carboxylase carboxyltransferase subunit beta</shortName>
        <ecNumber evidence="2">2.1.3.15</ecNumber>
    </recommendedName>
</protein>
<sequence>MERWGFNSMLFKKEFERRCGLNKSMGSLGPIENTSEDPNLKVKNIHSCSNVDYLFGVKDIWNFISDDTFLVSDRNGDSYSIYFDIENQIFEVDNDHSFLSELESSFSSYRNSSYLNNGFRGEDPYYNSYMSYMYDTQYSWNNHINSCIDNYLQSQICIDTSIISGGESYGDSYIYRAICSGESLNSSENEGSSRRTRTKGSDLTIRESSNDLEVTQKYKHLWVQCENCYGLNYKKFLKSKMNICEQCGYHLKMSSSDRIELLIDPGTWDPMDEDMVSLDPIEFHSEEEPYKDRIDSYQRKTGLTEAVQTGIGQLNGIPVAIGVMDFQFMGGSMGSVVGEKITRLIEHAANQNLPLIIVCASGGARMQEGSLSLMQMAKISSALYDYQLNKKLFYVSILTSPTTGGVTASFGMLGDIIIAEPNAYIAFAGKRVIEQTLNKTVPEGSQAAEYLFQKGLFDLIVPRNLLKSVLSELFKLHAFFPLNQKSSKIK</sequence>
<accession>Q2MIH8</accession>
<comment type="function">
    <text evidence="2">Component of the acetyl coenzyme A carboxylase (ACC) complex. Biotin carboxylase (BC) catalyzes the carboxylation of biotin on its carrier protein (BCCP) and then the CO(2) group is transferred by the transcarboxylase to acetyl-CoA to form malonyl-CoA.</text>
</comment>
<comment type="catalytic activity">
    <reaction evidence="2">
        <text>N(6)-carboxybiotinyl-L-lysyl-[protein] + acetyl-CoA = N(6)-biotinyl-L-lysyl-[protein] + malonyl-CoA</text>
        <dbReference type="Rhea" id="RHEA:54728"/>
        <dbReference type="Rhea" id="RHEA-COMP:10505"/>
        <dbReference type="Rhea" id="RHEA-COMP:10506"/>
        <dbReference type="ChEBI" id="CHEBI:57288"/>
        <dbReference type="ChEBI" id="CHEBI:57384"/>
        <dbReference type="ChEBI" id="CHEBI:83144"/>
        <dbReference type="ChEBI" id="CHEBI:83145"/>
        <dbReference type="EC" id="2.1.3.15"/>
    </reaction>
</comment>
<comment type="cofactor">
    <cofactor evidence="2">
        <name>Zn(2+)</name>
        <dbReference type="ChEBI" id="CHEBI:29105"/>
    </cofactor>
    <text evidence="2">Binds 1 zinc ion per subunit.</text>
</comment>
<comment type="pathway">
    <text evidence="2">Lipid metabolism; malonyl-CoA biosynthesis; malonyl-CoA from acetyl-CoA: step 1/1.</text>
</comment>
<comment type="subunit">
    <text evidence="1">Acetyl-CoA carboxylase is a heterohexamer composed of biotin carboxyl carrier protein, biotin carboxylase and 2 subunits each of ACCase subunit alpha and ACCase plastid-coded subunit beta (accD).</text>
</comment>
<comment type="subcellular location">
    <subcellularLocation>
        <location evidence="2">Plastid</location>
        <location evidence="2">Chloroplast stroma</location>
    </subcellularLocation>
</comment>
<comment type="similarity">
    <text evidence="2">Belongs to the AccD/PCCB family.</text>
</comment>
<comment type="sequence caution" evidence="5">
    <conflict type="erroneous initiation">
        <sequence resource="EMBL-CDS" id="ABC56222"/>
    </conflict>
    <text>Extended N-terminus.</text>
</comment>
<geneLocation type="chloroplast"/>
<keyword id="KW-0067">ATP-binding</keyword>
<keyword id="KW-0150">Chloroplast</keyword>
<keyword id="KW-0275">Fatty acid biosynthesis</keyword>
<keyword id="KW-0276">Fatty acid metabolism</keyword>
<keyword id="KW-0444">Lipid biosynthesis</keyword>
<keyword id="KW-0443">Lipid metabolism</keyword>
<keyword id="KW-0479">Metal-binding</keyword>
<keyword id="KW-0547">Nucleotide-binding</keyword>
<keyword id="KW-0934">Plastid</keyword>
<keyword id="KW-0808">Transferase</keyword>
<keyword id="KW-0862">Zinc</keyword>
<keyword id="KW-0863">Zinc-finger</keyword>
<evidence type="ECO:0000250" key="1"/>
<evidence type="ECO:0000255" key="2">
    <source>
        <dbReference type="HAMAP-Rule" id="MF_01395"/>
    </source>
</evidence>
<evidence type="ECO:0000255" key="3">
    <source>
        <dbReference type="PROSITE-ProRule" id="PRU01136"/>
    </source>
</evidence>
<evidence type="ECO:0000256" key="4">
    <source>
        <dbReference type="SAM" id="MobiDB-lite"/>
    </source>
</evidence>
<evidence type="ECO:0000305" key="5"/>
<organism>
    <name type="scientific">Solanum bulbocastanum</name>
    <name type="common">Wild potato</name>
    <dbReference type="NCBI Taxonomy" id="147425"/>
    <lineage>
        <taxon>Eukaryota</taxon>
        <taxon>Viridiplantae</taxon>
        <taxon>Streptophyta</taxon>
        <taxon>Embryophyta</taxon>
        <taxon>Tracheophyta</taxon>
        <taxon>Spermatophyta</taxon>
        <taxon>Magnoliopsida</taxon>
        <taxon>eudicotyledons</taxon>
        <taxon>Gunneridae</taxon>
        <taxon>Pentapetalae</taxon>
        <taxon>asterids</taxon>
        <taxon>lamiids</taxon>
        <taxon>Solanales</taxon>
        <taxon>Solanaceae</taxon>
        <taxon>Solanoideae</taxon>
        <taxon>Solaneae</taxon>
        <taxon>Solanum</taxon>
    </lineage>
</organism>
<proteinExistence type="inferred from homology"/>
<dbReference type="EC" id="2.1.3.15" evidence="2"/>
<dbReference type="EMBL" id="DQ347958">
    <property type="protein sequence ID" value="ABC56222.1"/>
    <property type="status" value="ALT_INIT"/>
    <property type="molecule type" value="Genomic_DNA"/>
</dbReference>
<dbReference type="RefSeq" id="YP_538857.1">
    <property type="nucleotide sequence ID" value="NC_007943.1"/>
</dbReference>
<dbReference type="SMR" id="Q2MIH8"/>
<dbReference type="GeneID" id="3989433"/>
<dbReference type="UniPathway" id="UPA00655">
    <property type="reaction ID" value="UER00711"/>
</dbReference>
<dbReference type="GO" id="GO:0009317">
    <property type="term" value="C:acetyl-CoA carboxylase complex"/>
    <property type="evidence" value="ECO:0007669"/>
    <property type="project" value="InterPro"/>
</dbReference>
<dbReference type="GO" id="GO:0009570">
    <property type="term" value="C:chloroplast stroma"/>
    <property type="evidence" value="ECO:0007669"/>
    <property type="project" value="UniProtKB-SubCell"/>
</dbReference>
<dbReference type="GO" id="GO:0003989">
    <property type="term" value="F:acetyl-CoA carboxylase activity"/>
    <property type="evidence" value="ECO:0007669"/>
    <property type="project" value="InterPro"/>
</dbReference>
<dbReference type="GO" id="GO:0005524">
    <property type="term" value="F:ATP binding"/>
    <property type="evidence" value="ECO:0007669"/>
    <property type="project" value="UniProtKB-KW"/>
</dbReference>
<dbReference type="GO" id="GO:0016743">
    <property type="term" value="F:carboxyl- or carbamoyltransferase activity"/>
    <property type="evidence" value="ECO:0007669"/>
    <property type="project" value="UniProtKB-UniRule"/>
</dbReference>
<dbReference type="GO" id="GO:0008270">
    <property type="term" value="F:zinc ion binding"/>
    <property type="evidence" value="ECO:0007669"/>
    <property type="project" value="UniProtKB-UniRule"/>
</dbReference>
<dbReference type="GO" id="GO:0006633">
    <property type="term" value="P:fatty acid biosynthetic process"/>
    <property type="evidence" value="ECO:0007669"/>
    <property type="project" value="UniProtKB-KW"/>
</dbReference>
<dbReference type="GO" id="GO:2001295">
    <property type="term" value="P:malonyl-CoA biosynthetic process"/>
    <property type="evidence" value="ECO:0007669"/>
    <property type="project" value="UniProtKB-UniRule"/>
</dbReference>
<dbReference type="Gene3D" id="3.90.226.10">
    <property type="entry name" value="2-enoyl-CoA Hydratase, Chain A, domain 1"/>
    <property type="match status" value="1"/>
</dbReference>
<dbReference type="HAMAP" id="MF_01395">
    <property type="entry name" value="AcetylCoA_CT_beta"/>
    <property type="match status" value="1"/>
</dbReference>
<dbReference type="InterPro" id="IPR034733">
    <property type="entry name" value="AcCoA_carboxyl_beta"/>
</dbReference>
<dbReference type="InterPro" id="IPR000438">
    <property type="entry name" value="Acetyl_CoA_COase_Trfase_b_su"/>
</dbReference>
<dbReference type="InterPro" id="IPR029045">
    <property type="entry name" value="ClpP/crotonase-like_dom_sf"/>
</dbReference>
<dbReference type="InterPro" id="IPR011762">
    <property type="entry name" value="COA_CT_N"/>
</dbReference>
<dbReference type="NCBIfam" id="TIGR00515">
    <property type="entry name" value="accD"/>
    <property type="match status" value="1"/>
</dbReference>
<dbReference type="PANTHER" id="PTHR42995">
    <property type="entry name" value="ACETYL-COENZYME A CARBOXYLASE CARBOXYL TRANSFERASE SUBUNIT BETA, CHLOROPLASTIC"/>
    <property type="match status" value="1"/>
</dbReference>
<dbReference type="PANTHER" id="PTHR42995:SF5">
    <property type="entry name" value="ACETYL-COENZYME A CARBOXYLASE CARBOXYL TRANSFERASE SUBUNIT BETA, CHLOROPLASTIC"/>
    <property type="match status" value="1"/>
</dbReference>
<dbReference type="Pfam" id="PF01039">
    <property type="entry name" value="Carboxyl_trans"/>
    <property type="match status" value="1"/>
</dbReference>
<dbReference type="PRINTS" id="PR01070">
    <property type="entry name" value="ACCCTRFRASEB"/>
</dbReference>
<dbReference type="SUPFAM" id="SSF52096">
    <property type="entry name" value="ClpP/crotonase"/>
    <property type="match status" value="1"/>
</dbReference>
<dbReference type="PROSITE" id="PS50980">
    <property type="entry name" value="COA_CT_NTER"/>
    <property type="match status" value="1"/>
</dbReference>
<gene>
    <name evidence="2" type="primary">accD</name>
</gene>
<reference key="1">
    <citation type="journal article" date="2006" name="Theor. Appl. Genet.">
        <title>Complete chloroplast genome sequences of Solanum bulbocastanum, Solanum lycopersicum and comparative analyses with other Solanaceae genomes.</title>
        <authorList>
            <person name="Daniell H."/>
            <person name="Lee S.-B."/>
            <person name="Grevich J."/>
            <person name="Saski C."/>
            <person name="Quesada-Vargas T."/>
            <person name="Guda C."/>
            <person name="Tomkins J."/>
            <person name="Jansen R.K."/>
        </authorList>
    </citation>
    <scope>NUCLEOTIDE SEQUENCE [LARGE SCALE GENOMIC DNA]</scope>
    <source>
        <strain>cv. PT29</strain>
    </source>
</reference>